<proteinExistence type="inferred from homology"/>
<name>DABA_LEGPL</name>
<evidence type="ECO:0000255" key="1">
    <source>
        <dbReference type="HAMAP-Rule" id="MF_01871"/>
    </source>
</evidence>
<sequence length="762" mass="86905">MSSHITLIKTNTNNENKMTQFNYKVDNDVMIIRAMVNNVAKQMTPVWPLEKFIACNALHGFESMSFEEAVIQNQTAKKGTPFNEKLERVNWHMIKWCGSFLDIGQGTLEMPHRDKGLYFGFLKLAPFDSALHQNSKSIKSWLSNLPEMPEQAIRLCLDNLGVLNQKQEDFLQSTLSHLPGWAGYIKWISEWKNRNGKEENPVSLVDFIAVRLVITCILWPEASQEEKKKKKDSADTKQLIQNIKNKEDNYRQLLLKKLLPELSKAHIKENRANAQMVFCIDVRSEPFRRCIEKLGHYETLGFAGFFGLPVSIKDYDGETIKDSCPVLLKPRFNIHEKAIAANEHCIEHHEKGKEFKNILNRVYQQLKYNFSTPFALVESLGIWCGITMFLKSCSPIFARRLTKDLNEMICPSIQTQPVFELDLLEKEVGISLQEQIAYAEMALRLMGLTDNFAKLVIFCGHGSSTQNNPYASALDCGACGGNQGGKNAQLLASILNKIIVRRALAENGINIPQDTLFYGAQHDTTTDEVEIYHSNVSQFIHQDILAQLRTDLNMAKYNNNLERINYLNSIDCAEKDIARRSTDWSETRPEWGLARNAAFIVAPRQLTKNINLEGRCFLHSYDWSQDKDGTLLETILTAPMVVAQWINTQYLFSTIDNVAYGSGSKITHNVAGKIGVMQGNASDLMHGLPLQSVMSHDEQSFHEPQRLLTVVYAPREIISELVEKHDVLKTLFFNEWVHLVAIDPRNHLFYKLEKTNTWSVIQ</sequence>
<accession>Q5WZV6</accession>
<gene>
    <name evidence="1" type="primary">dabA</name>
    <name type="ordered locus">lpl0275</name>
</gene>
<feature type="chain" id="PRO_0000387270" description="Probable inorganic carbon transporter subunit DabA">
    <location>
        <begin position="1"/>
        <end position="762"/>
    </location>
</feature>
<feature type="binding site" evidence="1">
    <location>
        <position position="279"/>
    </location>
    <ligand>
        <name>Zn(2+)</name>
        <dbReference type="ChEBI" id="CHEBI:29105"/>
    </ligand>
</feature>
<feature type="binding site" evidence="1">
    <location>
        <position position="281"/>
    </location>
    <ligand>
        <name>Zn(2+)</name>
        <dbReference type="ChEBI" id="CHEBI:29105"/>
    </ligand>
</feature>
<feature type="binding site" evidence="1">
    <location>
        <position position="461"/>
    </location>
    <ligand>
        <name>Zn(2+)</name>
        <dbReference type="ChEBI" id="CHEBI:29105"/>
    </ligand>
</feature>
<feature type="binding site" evidence="1">
    <location>
        <position position="476"/>
    </location>
    <ligand>
        <name>Zn(2+)</name>
        <dbReference type="ChEBI" id="CHEBI:29105"/>
    </ligand>
</feature>
<comment type="function">
    <text evidence="1">Part of an energy-coupled inorganic carbon pump.</text>
</comment>
<comment type="cofactor">
    <cofactor evidence="1">
        <name>Zn(2+)</name>
        <dbReference type="ChEBI" id="CHEBI:29105"/>
    </cofactor>
</comment>
<comment type="subunit">
    <text evidence="1">Forms a complex with DabB.</text>
</comment>
<comment type="subcellular location">
    <subcellularLocation>
        <location evidence="1">Cell inner membrane</location>
        <topology evidence="1">Peripheral membrane protein</topology>
    </subcellularLocation>
</comment>
<comment type="similarity">
    <text evidence="1">Belongs to the inorganic carbon transporter (TC 9.A.2) DabA family.</text>
</comment>
<protein>
    <recommendedName>
        <fullName evidence="1">Probable inorganic carbon transporter subunit DabA</fullName>
    </recommendedName>
</protein>
<organism>
    <name type="scientific">Legionella pneumophila (strain Lens)</name>
    <dbReference type="NCBI Taxonomy" id="297245"/>
    <lineage>
        <taxon>Bacteria</taxon>
        <taxon>Pseudomonadati</taxon>
        <taxon>Pseudomonadota</taxon>
        <taxon>Gammaproteobacteria</taxon>
        <taxon>Legionellales</taxon>
        <taxon>Legionellaceae</taxon>
        <taxon>Legionella</taxon>
    </lineage>
</organism>
<keyword id="KW-0997">Cell inner membrane</keyword>
<keyword id="KW-1003">Cell membrane</keyword>
<keyword id="KW-0472">Membrane</keyword>
<keyword id="KW-0479">Metal-binding</keyword>
<keyword id="KW-0813">Transport</keyword>
<keyword id="KW-0862">Zinc</keyword>
<dbReference type="EMBL" id="CR628337">
    <property type="protein sequence ID" value="CAH14506.1"/>
    <property type="molecule type" value="Genomic_DNA"/>
</dbReference>
<dbReference type="RefSeq" id="WP_011214540.1">
    <property type="nucleotide sequence ID" value="NC_006369.1"/>
</dbReference>
<dbReference type="KEGG" id="lpf:lpl0275"/>
<dbReference type="LegioList" id="lpl0275"/>
<dbReference type="HOGENOM" id="CLU_009885_0_0_6"/>
<dbReference type="Proteomes" id="UP000002517">
    <property type="component" value="Chromosome"/>
</dbReference>
<dbReference type="GO" id="GO:0005886">
    <property type="term" value="C:plasma membrane"/>
    <property type="evidence" value="ECO:0007669"/>
    <property type="project" value="UniProtKB-SubCell"/>
</dbReference>
<dbReference type="GO" id="GO:0008270">
    <property type="term" value="F:zinc ion binding"/>
    <property type="evidence" value="ECO:0007669"/>
    <property type="project" value="UniProtKB-UniRule"/>
</dbReference>
<dbReference type="HAMAP" id="MF_01871">
    <property type="entry name" value="DabA"/>
    <property type="match status" value="1"/>
</dbReference>
<dbReference type="InterPro" id="IPR018752">
    <property type="entry name" value="DabA"/>
</dbReference>
<dbReference type="PANTHER" id="PTHR38344:SF1">
    <property type="entry name" value="INORGANIC CARBON TRANSPORTER SUBUNIT DABA-RELATED"/>
    <property type="match status" value="1"/>
</dbReference>
<dbReference type="PANTHER" id="PTHR38344">
    <property type="entry name" value="UPF0753 PROTEIN AQ_863"/>
    <property type="match status" value="1"/>
</dbReference>
<dbReference type="Pfam" id="PF10070">
    <property type="entry name" value="DabA"/>
    <property type="match status" value="1"/>
</dbReference>
<reference key="1">
    <citation type="journal article" date="2004" name="Nat. Genet.">
        <title>Evidence in the Legionella pneumophila genome for exploitation of host cell functions and high genome plasticity.</title>
        <authorList>
            <person name="Cazalet C."/>
            <person name="Rusniok C."/>
            <person name="Brueggemann H."/>
            <person name="Zidane N."/>
            <person name="Magnier A."/>
            <person name="Ma L."/>
            <person name="Tichit M."/>
            <person name="Jarraud S."/>
            <person name="Bouchier C."/>
            <person name="Vandenesch F."/>
            <person name="Kunst F."/>
            <person name="Etienne J."/>
            <person name="Glaser P."/>
            <person name="Buchrieser C."/>
        </authorList>
    </citation>
    <scope>NUCLEOTIDE SEQUENCE [LARGE SCALE GENOMIC DNA]</scope>
    <source>
        <strain>Lens</strain>
    </source>
</reference>